<sequence length="845" mass="98137">MELWRQCTHWLIQCRVLPPSHRVTWEGAQVCELAQALRDGVLLCQLLNNLLPQAINLREVNLRPQMSQFLCLKNIRTFLSTCCEKFGLKRSELFEAFDLFDVQDFGKVIYTLSALSWTPIAQNKGIMPFPTEDSALNDEDIYSGLSDQIDDTAEEDEDLYDCVENEEAEGDEIYEDLMRLESVPTPPKMTEYDKRCCCLREIQQTEEKYTDTLGSIQQHFMKPLQRFLKPQDMETIFVNIEELFSVHTHFLKELKDALAGPGATTLYQVFIKYKERFLVYGRYCSQVESASKHLDQVATAREDVQMKLEECSQRANNGRFTLRDLLMVPMQRVLKYHLLLQELVKHTQDATEKENLRLALDAMRDLAQCVNEVKRDNETLRQITNFQLSIENLDQSLANYGRPKIDGELKITSVERRSKTDRYAFLLDKALLICKRRGDSYDLKASVNLHSFQVRDDSSGERDNKKWSHMFLLIEDQGAQGYELFFKTRELKKKWMEQFEMAISNIYPENATANGHDFQMFSFEETTSCKACQMLLRGTFYQGYRCYRCRAPAHKECLGRVPPCGRHGQDFAGTMKKDKLHRRAQDKKRNELGLPKMEVFQEYYGIPPPPGAFGPFLRLNPGDIVELTKAEAEHNWWEGRNTATNEVGWFPCNRVHPYVHGPPQDLSVHLWYAGPMERAGAEGILTNRSDGTYLVRQRVKDTAEFAISIKYNVEVKHIKIMTSEGLYRITEKKAFRGLLELVEFYQQNSLKDCFKSLDTTLQFPYKEPERRAISKPPAGSTKYFGTAKARYDFCARDRSELSLKEGDIIKILNKKGQQGWWRGEIYGRIGWFPSNYVEEDYSEYC</sequence>
<gene>
    <name type="primary">Vav1</name>
    <name type="synonym">Vav</name>
</gene>
<accession>P27870</accession>
<accession>Q8BTV7</accession>
<evidence type="ECO:0000250" key="1"/>
<evidence type="ECO:0000250" key="2">
    <source>
        <dbReference type="UniProtKB" id="P15498"/>
    </source>
</evidence>
<evidence type="ECO:0000255" key="3">
    <source>
        <dbReference type="PROSITE-ProRule" id="PRU00044"/>
    </source>
</evidence>
<evidence type="ECO:0000255" key="4">
    <source>
        <dbReference type="PROSITE-ProRule" id="PRU00062"/>
    </source>
</evidence>
<evidence type="ECO:0000255" key="5">
    <source>
        <dbReference type="PROSITE-ProRule" id="PRU00145"/>
    </source>
</evidence>
<evidence type="ECO:0000255" key="6">
    <source>
        <dbReference type="PROSITE-ProRule" id="PRU00191"/>
    </source>
</evidence>
<evidence type="ECO:0000255" key="7">
    <source>
        <dbReference type="PROSITE-ProRule" id="PRU00192"/>
    </source>
</evidence>
<evidence type="ECO:0000255" key="8">
    <source>
        <dbReference type="PROSITE-ProRule" id="PRU00226"/>
    </source>
</evidence>
<evidence type="ECO:0000269" key="9">
    <source>
    </source>
</evidence>
<evidence type="ECO:0000269" key="10">
    <source>
    </source>
</evidence>
<evidence type="ECO:0000269" key="11">
    <source>
    </source>
</evidence>
<evidence type="ECO:0000269" key="12">
    <source>
    </source>
</evidence>
<evidence type="ECO:0000269" key="13">
    <source>
    </source>
</evidence>
<evidence type="ECO:0000269" key="14">
    <source>
    </source>
</evidence>
<evidence type="ECO:0000269" key="15">
    <source>
    </source>
</evidence>
<evidence type="ECO:0000269" key="16">
    <source>
    </source>
</evidence>
<evidence type="ECO:0000269" key="17">
    <source>
    </source>
</evidence>
<evidence type="ECO:0000269" key="18">
    <source>
    </source>
</evidence>
<evidence type="ECO:0000305" key="19"/>
<evidence type="ECO:0007744" key="20">
    <source>
    </source>
</evidence>
<evidence type="ECO:0007829" key="21">
    <source>
        <dbReference type="PDB" id="1F5X"/>
    </source>
</evidence>
<evidence type="ECO:0007829" key="22">
    <source>
        <dbReference type="PDB" id="1GCQ"/>
    </source>
</evidence>
<evidence type="ECO:0007829" key="23">
    <source>
        <dbReference type="PDB" id="1K1Z"/>
    </source>
</evidence>
<evidence type="ECO:0007829" key="24">
    <source>
        <dbReference type="PDB" id="2KBT"/>
    </source>
</evidence>
<evidence type="ECO:0007829" key="25">
    <source>
        <dbReference type="PDB" id="2VRW"/>
    </source>
</evidence>
<protein>
    <recommendedName>
        <fullName>Proto-oncogene vav</fullName>
    </recommendedName>
    <alternativeName>
        <fullName>p95vav</fullName>
    </alternativeName>
</protein>
<proteinExistence type="evidence at protein level"/>
<dbReference type="EMBL" id="X64361">
    <property type="protein sequence ID" value="CAA45713.1"/>
    <property type="molecule type" value="mRNA"/>
</dbReference>
<dbReference type="EMBL" id="AK088586">
    <property type="protein sequence ID" value="BAC40436.1"/>
    <property type="molecule type" value="mRNA"/>
</dbReference>
<dbReference type="EMBL" id="M59833">
    <property type="protein sequence ID" value="AAA63402.1"/>
    <property type="molecule type" value="mRNA"/>
</dbReference>
<dbReference type="CCDS" id="CCDS28931.1"/>
<dbReference type="PIR" id="A61187">
    <property type="entry name" value="TVMSVV"/>
</dbReference>
<dbReference type="RefSeq" id="NP_035821.3">
    <property type="nucleotide sequence ID" value="NM_011691.4"/>
</dbReference>
<dbReference type="PDB" id="1F5X">
    <property type="method" value="NMR"/>
    <property type="chains" value="A=170-375"/>
</dbReference>
<dbReference type="PDB" id="1GCP">
    <property type="method" value="X-ray"/>
    <property type="resolution" value="2.10 A"/>
    <property type="chains" value="A/B/C/D=595-660"/>
</dbReference>
<dbReference type="PDB" id="1GCQ">
    <property type="method" value="X-ray"/>
    <property type="resolution" value="1.68 A"/>
    <property type="chains" value="C=595-660"/>
</dbReference>
<dbReference type="PDB" id="1K1Z">
    <property type="method" value="NMR"/>
    <property type="chains" value="A=583-660"/>
</dbReference>
<dbReference type="PDB" id="2KBT">
    <property type="method" value="NMR"/>
    <property type="chains" value="A=784-844"/>
</dbReference>
<dbReference type="PDB" id="2VRW">
    <property type="method" value="X-ray"/>
    <property type="resolution" value="1.85 A"/>
    <property type="chains" value="B=170-575"/>
</dbReference>
<dbReference type="PDBsum" id="1F5X"/>
<dbReference type="PDBsum" id="1GCP"/>
<dbReference type="PDBsum" id="1GCQ"/>
<dbReference type="PDBsum" id="1K1Z"/>
<dbReference type="PDBsum" id="2KBT"/>
<dbReference type="PDBsum" id="2VRW"/>
<dbReference type="SMR" id="P27870"/>
<dbReference type="BioGRID" id="204500">
    <property type="interactions" value="29"/>
</dbReference>
<dbReference type="CORUM" id="P27870"/>
<dbReference type="DIP" id="DIP-31010N"/>
<dbReference type="FunCoup" id="P27870">
    <property type="interactions" value="1353"/>
</dbReference>
<dbReference type="IntAct" id="P27870">
    <property type="interactions" value="14"/>
</dbReference>
<dbReference type="MINT" id="P27870"/>
<dbReference type="STRING" id="10090.ENSMUSP00000005889"/>
<dbReference type="GlyGen" id="P27870">
    <property type="glycosylation" value="1 site"/>
</dbReference>
<dbReference type="iPTMnet" id="P27870"/>
<dbReference type="PhosphoSitePlus" id="P27870"/>
<dbReference type="jPOST" id="P27870"/>
<dbReference type="PaxDb" id="10090-ENSMUSP00000005889"/>
<dbReference type="PeptideAtlas" id="P27870"/>
<dbReference type="ProteomicsDB" id="298277"/>
<dbReference type="Antibodypedia" id="665">
    <property type="antibodies" value="747 antibodies from 41 providers"/>
</dbReference>
<dbReference type="DNASU" id="22324"/>
<dbReference type="Ensembl" id="ENSMUST00000005889.16">
    <property type="protein sequence ID" value="ENSMUSP00000005889.10"/>
    <property type="gene ID" value="ENSMUSG00000034116.18"/>
</dbReference>
<dbReference type="GeneID" id="22324"/>
<dbReference type="KEGG" id="mmu:22324"/>
<dbReference type="UCSC" id="uc008dep.2">
    <property type="organism name" value="mouse"/>
</dbReference>
<dbReference type="AGR" id="MGI:98923"/>
<dbReference type="CTD" id="7409"/>
<dbReference type="MGI" id="MGI:98923">
    <property type="gene designation" value="Vav1"/>
</dbReference>
<dbReference type="VEuPathDB" id="HostDB:ENSMUSG00000034116"/>
<dbReference type="eggNOG" id="KOG2996">
    <property type="taxonomic scope" value="Eukaryota"/>
</dbReference>
<dbReference type="GeneTree" id="ENSGT00940000159125"/>
<dbReference type="HOGENOM" id="CLU_013787_0_0_1"/>
<dbReference type="InParanoid" id="P27870"/>
<dbReference type="OMA" id="PYISRPT"/>
<dbReference type="OrthoDB" id="5340910at2759"/>
<dbReference type="PhylomeDB" id="P27870"/>
<dbReference type="TreeFam" id="TF316171"/>
<dbReference type="Reactome" id="R-MMU-114604">
    <property type="pathway name" value="GPVI-mediated activation cascade"/>
</dbReference>
<dbReference type="Reactome" id="R-MMU-1257604">
    <property type="pathway name" value="PIP3 activates AKT signaling"/>
</dbReference>
<dbReference type="Reactome" id="R-MMU-1433557">
    <property type="pathway name" value="Signaling by SCF-KIT"/>
</dbReference>
<dbReference type="Reactome" id="R-MMU-193648">
    <property type="pathway name" value="NRAGE signals death through JNK"/>
</dbReference>
<dbReference type="Reactome" id="R-MMU-2029482">
    <property type="pathway name" value="Regulation of actin dynamics for phagocytic cup formation"/>
</dbReference>
<dbReference type="Reactome" id="R-MMU-2871796">
    <property type="pathway name" value="FCERI mediated MAPK activation"/>
</dbReference>
<dbReference type="Reactome" id="R-MMU-2871809">
    <property type="pathway name" value="FCERI mediated Ca+2 mobilization"/>
</dbReference>
<dbReference type="Reactome" id="R-MMU-389359">
    <property type="pathway name" value="CD28 dependent Vav1 pathway"/>
</dbReference>
<dbReference type="Reactome" id="R-MMU-416482">
    <property type="pathway name" value="G alpha (12/13) signalling events"/>
</dbReference>
<dbReference type="Reactome" id="R-MMU-4420097">
    <property type="pathway name" value="VEGFA-VEGFR2 Pathway"/>
</dbReference>
<dbReference type="Reactome" id="R-MMU-512988">
    <property type="pathway name" value="Interleukin-3, Interleukin-5 and GM-CSF signaling"/>
</dbReference>
<dbReference type="Reactome" id="R-MMU-5218920">
    <property type="pathway name" value="VEGFR2 mediated vascular permeability"/>
</dbReference>
<dbReference type="Reactome" id="R-MMU-6811558">
    <property type="pathway name" value="PI5P, PP2A and IER3 Regulate PI3K/AKT Signaling"/>
</dbReference>
<dbReference type="Reactome" id="R-MMU-8980692">
    <property type="pathway name" value="RHOA GTPase cycle"/>
</dbReference>
<dbReference type="Reactome" id="R-MMU-9013149">
    <property type="pathway name" value="RAC1 GTPase cycle"/>
</dbReference>
<dbReference type="Reactome" id="R-MMU-9013404">
    <property type="pathway name" value="RAC2 GTPase cycle"/>
</dbReference>
<dbReference type="Reactome" id="R-MMU-9013408">
    <property type="pathway name" value="RHOG GTPase cycle"/>
</dbReference>
<dbReference type="Reactome" id="R-MMU-9027284">
    <property type="pathway name" value="Erythropoietin activates RAS"/>
</dbReference>
<dbReference type="Reactome" id="R-MMU-912631">
    <property type="pathway name" value="Regulation of signaling by CBL"/>
</dbReference>
<dbReference type="Reactome" id="R-MMU-9748787">
    <property type="pathway name" value="Azathioprine ADME"/>
</dbReference>
<dbReference type="Reactome" id="R-MMU-983695">
    <property type="pathway name" value="Antigen activates B Cell Receptor (BCR) leading to generation of second messengers"/>
</dbReference>
<dbReference type="BioGRID-ORCS" id="22324">
    <property type="hits" value="5 hits in 79 CRISPR screens"/>
</dbReference>
<dbReference type="ChiTaRS" id="Vav1">
    <property type="organism name" value="mouse"/>
</dbReference>
<dbReference type="EvolutionaryTrace" id="P27870"/>
<dbReference type="PRO" id="PR:P27870"/>
<dbReference type="Proteomes" id="UP000000589">
    <property type="component" value="Chromosome 17"/>
</dbReference>
<dbReference type="RNAct" id="P27870">
    <property type="molecule type" value="protein"/>
</dbReference>
<dbReference type="Bgee" id="ENSMUSG00000034116">
    <property type="expression patterns" value="Expressed in skin of snout and 160 other cell types or tissues"/>
</dbReference>
<dbReference type="ExpressionAtlas" id="P27870">
    <property type="expression patterns" value="baseline and differential"/>
</dbReference>
<dbReference type="GO" id="GO:0005911">
    <property type="term" value="C:cell-cell junction"/>
    <property type="evidence" value="ECO:0000314"/>
    <property type="project" value="MGI"/>
</dbReference>
<dbReference type="GO" id="GO:0005829">
    <property type="term" value="C:cytosol"/>
    <property type="evidence" value="ECO:0000304"/>
    <property type="project" value="Reactome"/>
</dbReference>
<dbReference type="GO" id="GO:0005085">
    <property type="term" value="F:guanyl-nucleotide exchange factor activity"/>
    <property type="evidence" value="ECO:0000314"/>
    <property type="project" value="UniProtKB"/>
</dbReference>
<dbReference type="GO" id="GO:0140031">
    <property type="term" value="F:phosphorylation-dependent protein binding"/>
    <property type="evidence" value="ECO:0000353"/>
    <property type="project" value="UniProtKB"/>
</dbReference>
<dbReference type="GO" id="GO:0001784">
    <property type="term" value="F:phosphotyrosine residue binding"/>
    <property type="evidence" value="ECO:0007669"/>
    <property type="project" value="Ensembl"/>
</dbReference>
<dbReference type="GO" id="GO:0008270">
    <property type="term" value="F:zinc ion binding"/>
    <property type="evidence" value="ECO:0007669"/>
    <property type="project" value="UniProtKB-KW"/>
</dbReference>
<dbReference type="GO" id="GO:0007186">
    <property type="term" value="P:G protein-coupled receptor signaling pathway"/>
    <property type="evidence" value="ECO:0000316"/>
    <property type="project" value="MGI"/>
</dbReference>
<dbReference type="GO" id="GO:0006955">
    <property type="term" value="P:immune response"/>
    <property type="evidence" value="ECO:0000315"/>
    <property type="project" value="MGI"/>
</dbReference>
<dbReference type="GO" id="GO:0007229">
    <property type="term" value="P:integrin-mediated signaling pathway"/>
    <property type="evidence" value="ECO:0000316"/>
    <property type="project" value="MGI"/>
</dbReference>
<dbReference type="GO" id="GO:0035556">
    <property type="term" value="P:intracellular signal transduction"/>
    <property type="evidence" value="ECO:0000315"/>
    <property type="project" value="MGI"/>
</dbReference>
<dbReference type="GO" id="GO:0030101">
    <property type="term" value="P:natural killer cell activation"/>
    <property type="evidence" value="ECO:0007669"/>
    <property type="project" value="Ensembl"/>
</dbReference>
<dbReference type="GO" id="GO:0042267">
    <property type="term" value="P:natural killer cell mediated cytotoxicity"/>
    <property type="evidence" value="ECO:0007669"/>
    <property type="project" value="Ensembl"/>
</dbReference>
<dbReference type="GO" id="GO:0030593">
    <property type="term" value="P:neutrophil chemotaxis"/>
    <property type="evidence" value="ECO:0000316"/>
    <property type="project" value="MGI"/>
</dbReference>
<dbReference type="GO" id="GO:0006909">
    <property type="term" value="P:phagocytosis"/>
    <property type="evidence" value="ECO:0000316"/>
    <property type="project" value="MGI"/>
</dbReference>
<dbReference type="GO" id="GO:0045785">
    <property type="term" value="P:positive regulation of cell adhesion"/>
    <property type="evidence" value="ECO:0000316"/>
    <property type="project" value="MGI"/>
</dbReference>
<dbReference type="GO" id="GO:0045954">
    <property type="term" value="P:positive regulation of natural killer cell mediated cytotoxicity"/>
    <property type="evidence" value="ECO:0000316"/>
    <property type="project" value="MGI"/>
</dbReference>
<dbReference type="GO" id="GO:0072593">
    <property type="term" value="P:reactive oxygen species metabolic process"/>
    <property type="evidence" value="ECO:0000316"/>
    <property type="project" value="MGI"/>
</dbReference>
<dbReference type="GO" id="GO:0008361">
    <property type="term" value="P:regulation of cell size"/>
    <property type="evidence" value="ECO:0007669"/>
    <property type="project" value="Ensembl"/>
</dbReference>
<dbReference type="GO" id="GO:0042110">
    <property type="term" value="P:T cell activation"/>
    <property type="evidence" value="ECO:0000315"/>
    <property type="project" value="MGI"/>
</dbReference>
<dbReference type="GO" id="GO:0031295">
    <property type="term" value="P:T cell costimulation"/>
    <property type="evidence" value="ECO:0007669"/>
    <property type="project" value="Ensembl"/>
</dbReference>
<dbReference type="GO" id="GO:0030217">
    <property type="term" value="P:T cell differentiation"/>
    <property type="evidence" value="ECO:0000316"/>
    <property type="project" value="MGI"/>
</dbReference>
<dbReference type="CDD" id="cd20867">
    <property type="entry name" value="C1_VAV1"/>
    <property type="match status" value="1"/>
</dbReference>
<dbReference type="CDD" id="cd21262">
    <property type="entry name" value="CH_VAV1"/>
    <property type="match status" value="1"/>
</dbReference>
<dbReference type="CDD" id="cd01223">
    <property type="entry name" value="PH_Vav"/>
    <property type="match status" value="1"/>
</dbReference>
<dbReference type="CDD" id="cd00160">
    <property type="entry name" value="RhoGEF"/>
    <property type="match status" value="1"/>
</dbReference>
<dbReference type="CDD" id="cd10405">
    <property type="entry name" value="SH2_Vav1"/>
    <property type="match status" value="1"/>
</dbReference>
<dbReference type="CDD" id="cd11979">
    <property type="entry name" value="SH3_VAV1_1"/>
    <property type="match status" value="1"/>
</dbReference>
<dbReference type="CDD" id="cd11976">
    <property type="entry name" value="SH3_VAV1_2"/>
    <property type="match status" value="1"/>
</dbReference>
<dbReference type="FunFam" id="1.20.900.10:FF:000009">
    <property type="entry name" value="Vav guanine nucleotide exchange factor 1"/>
    <property type="match status" value="1"/>
</dbReference>
<dbReference type="FunFam" id="3.30.60.20:FF:000015">
    <property type="entry name" value="Vav guanine nucleotide exchange factor 1"/>
    <property type="match status" value="1"/>
</dbReference>
<dbReference type="FunFam" id="1.10.418.10:FF:000019">
    <property type="entry name" value="Vav guanine nucleotide exchange factor 2"/>
    <property type="match status" value="1"/>
</dbReference>
<dbReference type="FunFam" id="2.30.29.30:FF:000050">
    <property type="entry name" value="Vav guanine nucleotide exchange factor 2"/>
    <property type="match status" value="1"/>
</dbReference>
<dbReference type="FunFam" id="3.30.505.10:FF:000024">
    <property type="entry name" value="Vav guanine nucleotide exchange factor 2"/>
    <property type="match status" value="1"/>
</dbReference>
<dbReference type="FunFam" id="2.30.30.40:FF:000039">
    <property type="entry name" value="Vav guanine nucleotide exchange factor 3"/>
    <property type="match status" value="1"/>
</dbReference>
<dbReference type="FunFam" id="2.30.30.40:FF:000108">
    <property type="entry name" value="Vav guanine nucleotide exchange factor 3"/>
    <property type="match status" value="1"/>
</dbReference>
<dbReference type="Gene3D" id="3.30.60.20">
    <property type="match status" value="1"/>
</dbReference>
<dbReference type="Gene3D" id="1.10.418.10">
    <property type="entry name" value="Calponin-like domain"/>
    <property type="match status" value="1"/>
</dbReference>
<dbReference type="Gene3D" id="1.20.900.10">
    <property type="entry name" value="Dbl homology (DH) domain"/>
    <property type="match status" value="1"/>
</dbReference>
<dbReference type="Gene3D" id="2.30.29.30">
    <property type="entry name" value="Pleckstrin-homology domain (PH domain)/Phosphotyrosine-binding domain (PTB)"/>
    <property type="match status" value="1"/>
</dbReference>
<dbReference type="Gene3D" id="3.30.505.10">
    <property type="entry name" value="SH2 domain"/>
    <property type="match status" value="1"/>
</dbReference>
<dbReference type="Gene3D" id="2.30.30.40">
    <property type="entry name" value="SH3 Domains"/>
    <property type="match status" value="2"/>
</dbReference>
<dbReference type="InterPro" id="IPR022613">
    <property type="entry name" value="CAMSAP-like_CH_dom"/>
</dbReference>
<dbReference type="InterPro" id="IPR001715">
    <property type="entry name" value="CH_dom"/>
</dbReference>
<dbReference type="InterPro" id="IPR036872">
    <property type="entry name" value="CH_dom_sf"/>
</dbReference>
<dbReference type="InterPro" id="IPR035899">
    <property type="entry name" value="DBL_dom_sf"/>
</dbReference>
<dbReference type="InterPro" id="IPR000219">
    <property type="entry name" value="DH_dom"/>
</dbReference>
<dbReference type="InterPro" id="IPR001331">
    <property type="entry name" value="GDS_CDC24_CS"/>
</dbReference>
<dbReference type="InterPro" id="IPR002219">
    <property type="entry name" value="PE/DAG-bd"/>
</dbReference>
<dbReference type="InterPro" id="IPR011993">
    <property type="entry name" value="PH-like_dom_sf"/>
</dbReference>
<dbReference type="InterPro" id="IPR001849">
    <property type="entry name" value="PH_domain"/>
</dbReference>
<dbReference type="InterPro" id="IPR037832">
    <property type="entry name" value="PH_Vav"/>
</dbReference>
<dbReference type="InterPro" id="IPR000980">
    <property type="entry name" value="SH2"/>
</dbReference>
<dbReference type="InterPro" id="IPR036860">
    <property type="entry name" value="SH2_dom_sf"/>
</dbReference>
<dbReference type="InterPro" id="IPR036028">
    <property type="entry name" value="SH3-like_dom_sf"/>
</dbReference>
<dbReference type="InterPro" id="IPR001452">
    <property type="entry name" value="SH3_domain"/>
</dbReference>
<dbReference type="InterPro" id="IPR003096">
    <property type="entry name" value="SM22_calponin"/>
</dbReference>
<dbReference type="InterPro" id="IPR035879">
    <property type="entry name" value="VAV1_SH2"/>
</dbReference>
<dbReference type="InterPro" id="IPR035730">
    <property type="entry name" value="VAV1_SH3_1"/>
</dbReference>
<dbReference type="InterPro" id="IPR035729">
    <property type="entry name" value="VAV1_SH3_2"/>
</dbReference>
<dbReference type="PANTHER" id="PTHR45818">
    <property type="entry name" value="PROTEIN VAV"/>
    <property type="match status" value="1"/>
</dbReference>
<dbReference type="PANTHER" id="PTHR45818:SF2">
    <property type="entry name" value="PROTO-ONCOGENE VAV"/>
    <property type="match status" value="1"/>
</dbReference>
<dbReference type="Pfam" id="PF00130">
    <property type="entry name" value="C1_1"/>
    <property type="match status" value="1"/>
</dbReference>
<dbReference type="Pfam" id="PF11971">
    <property type="entry name" value="CAMSAP_CH"/>
    <property type="match status" value="1"/>
</dbReference>
<dbReference type="Pfam" id="PF00169">
    <property type="entry name" value="PH"/>
    <property type="match status" value="1"/>
</dbReference>
<dbReference type="Pfam" id="PF00621">
    <property type="entry name" value="RhoGEF"/>
    <property type="match status" value="1"/>
</dbReference>
<dbReference type="Pfam" id="PF00017">
    <property type="entry name" value="SH2"/>
    <property type="match status" value="1"/>
</dbReference>
<dbReference type="Pfam" id="PF00018">
    <property type="entry name" value="SH3_1"/>
    <property type="match status" value="2"/>
</dbReference>
<dbReference type="PRINTS" id="PR00401">
    <property type="entry name" value="SH2DOMAIN"/>
</dbReference>
<dbReference type="PRINTS" id="PR00452">
    <property type="entry name" value="SH3DOMAIN"/>
</dbReference>
<dbReference type="PRINTS" id="PR00888">
    <property type="entry name" value="SM22CALPONIN"/>
</dbReference>
<dbReference type="SMART" id="SM00109">
    <property type="entry name" value="C1"/>
    <property type="match status" value="1"/>
</dbReference>
<dbReference type="SMART" id="SM00033">
    <property type="entry name" value="CH"/>
    <property type="match status" value="1"/>
</dbReference>
<dbReference type="SMART" id="SM00233">
    <property type="entry name" value="PH"/>
    <property type="match status" value="1"/>
</dbReference>
<dbReference type="SMART" id="SM00325">
    <property type="entry name" value="RhoGEF"/>
    <property type="match status" value="1"/>
</dbReference>
<dbReference type="SMART" id="SM00252">
    <property type="entry name" value="SH2"/>
    <property type="match status" value="1"/>
</dbReference>
<dbReference type="SMART" id="SM00326">
    <property type="entry name" value="SH3"/>
    <property type="match status" value="2"/>
</dbReference>
<dbReference type="SUPFAM" id="SSF47576">
    <property type="entry name" value="Calponin-homology domain, CH-domain"/>
    <property type="match status" value="1"/>
</dbReference>
<dbReference type="SUPFAM" id="SSF48065">
    <property type="entry name" value="DBL homology domain (DH-domain)"/>
    <property type="match status" value="1"/>
</dbReference>
<dbReference type="SUPFAM" id="SSF50729">
    <property type="entry name" value="PH domain-like"/>
    <property type="match status" value="1"/>
</dbReference>
<dbReference type="SUPFAM" id="SSF55550">
    <property type="entry name" value="SH2 domain"/>
    <property type="match status" value="1"/>
</dbReference>
<dbReference type="SUPFAM" id="SSF50044">
    <property type="entry name" value="SH3-domain"/>
    <property type="match status" value="1"/>
</dbReference>
<dbReference type="PROSITE" id="PS50021">
    <property type="entry name" value="CH"/>
    <property type="match status" value="1"/>
</dbReference>
<dbReference type="PROSITE" id="PS00741">
    <property type="entry name" value="DH_1"/>
    <property type="match status" value="1"/>
</dbReference>
<dbReference type="PROSITE" id="PS50010">
    <property type="entry name" value="DH_2"/>
    <property type="match status" value="1"/>
</dbReference>
<dbReference type="PROSITE" id="PS50003">
    <property type="entry name" value="PH_DOMAIN"/>
    <property type="match status" value="1"/>
</dbReference>
<dbReference type="PROSITE" id="PS50001">
    <property type="entry name" value="SH2"/>
    <property type="match status" value="1"/>
</dbReference>
<dbReference type="PROSITE" id="PS50002">
    <property type="entry name" value="SH3"/>
    <property type="match status" value="2"/>
</dbReference>
<dbReference type="PROSITE" id="PS00479">
    <property type="entry name" value="ZF_DAG_PE_1"/>
    <property type="match status" value="1"/>
</dbReference>
<dbReference type="PROSITE" id="PS50081">
    <property type="entry name" value="ZF_DAG_PE_2"/>
    <property type="match status" value="1"/>
</dbReference>
<reference key="1">
    <citation type="journal article" date="1991" name="Cell Growth Differ.">
        <title>Mechanism of activation of the vav protooncogene.</title>
        <authorList>
            <person name="Coppola J."/>
            <person name="Bryant S."/>
            <person name="Koda T."/>
            <person name="Conway D."/>
            <person name="Barbacid M."/>
        </authorList>
    </citation>
    <scope>NUCLEOTIDE SEQUENCE [MRNA]</scope>
    <scope>TISSUE SPECIFICITY</scope>
    <scope>MUTAGENESIS OF CYS-529; CYS-532 AND HIS-554</scope>
</reference>
<reference key="2">
    <citation type="journal article" date="1992" name="Oncogene">
        <title>The hematopoietically expressed vav proto-oncogene shares homology with the dbl GDP-GTP exchange factor, the bcr gene and a yeast gene (CDC24) involved in cytoskeletal organization.</title>
        <authorList>
            <person name="Adams J.M."/>
            <person name="Houston H."/>
            <person name="Allen J."/>
            <person name="Lints T."/>
            <person name="Harvey R."/>
        </authorList>
    </citation>
    <scope>NUCLEOTIDE SEQUENCE [MRNA]</scope>
</reference>
<reference key="3">
    <citation type="journal article" date="2005" name="Science">
        <title>The transcriptional landscape of the mammalian genome.</title>
        <authorList>
            <person name="Carninci P."/>
            <person name="Kasukawa T."/>
            <person name="Katayama S."/>
            <person name="Gough J."/>
            <person name="Frith M.C."/>
            <person name="Maeda N."/>
            <person name="Oyama R."/>
            <person name="Ravasi T."/>
            <person name="Lenhard B."/>
            <person name="Wells C."/>
            <person name="Kodzius R."/>
            <person name="Shimokawa K."/>
            <person name="Bajic V.B."/>
            <person name="Brenner S.E."/>
            <person name="Batalov S."/>
            <person name="Forrest A.R."/>
            <person name="Zavolan M."/>
            <person name="Davis M.J."/>
            <person name="Wilming L.G."/>
            <person name="Aidinis V."/>
            <person name="Allen J.E."/>
            <person name="Ambesi-Impiombato A."/>
            <person name="Apweiler R."/>
            <person name="Aturaliya R.N."/>
            <person name="Bailey T.L."/>
            <person name="Bansal M."/>
            <person name="Baxter L."/>
            <person name="Beisel K.W."/>
            <person name="Bersano T."/>
            <person name="Bono H."/>
            <person name="Chalk A.M."/>
            <person name="Chiu K.P."/>
            <person name="Choudhary V."/>
            <person name="Christoffels A."/>
            <person name="Clutterbuck D.R."/>
            <person name="Crowe M.L."/>
            <person name="Dalla E."/>
            <person name="Dalrymple B.P."/>
            <person name="de Bono B."/>
            <person name="Della Gatta G."/>
            <person name="di Bernardo D."/>
            <person name="Down T."/>
            <person name="Engstrom P."/>
            <person name="Fagiolini M."/>
            <person name="Faulkner G."/>
            <person name="Fletcher C.F."/>
            <person name="Fukushima T."/>
            <person name="Furuno M."/>
            <person name="Futaki S."/>
            <person name="Gariboldi M."/>
            <person name="Georgii-Hemming P."/>
            <person name="Gingeras T.R."/>
            <person name="Gojobori T."/>
            <person name="Green R.E."/>
            <person name="Gustincich S."/>
            <person name="Harbers M."/>
            <person name="Hayashi Y."/>
            <person name="Hensch T.K."/>
            <person name="Hirokawa N."/>
            <person name="Hill D."/>
            <person name="Huminiecki L."/>
            <person name="Iacono M."/>
            <person name="Ikeo K."/>
            <person name="Iwama A."/>
            <person name="Ishikawa T."/>
            <person name="Jakt M."/>
            <person name="Kanapin A."/>
            <person name="Katoh M."/>
            <person name="Kawasawa Y."/>
            <person name="Kelso J."/>
            <person name="Kitamura H."/>
            <person name="Kitano H."/>
            <person name="Kollias G."/>
            <person name="Krishnan S.P."/>
            <person name="Kruger A."/>
            <person name="Kummerfeld S.K."/>
            <person name="Kurochkin I.V."/>
            <person name="Lareau L.F."/>
            <person name="Lazarevic D."/>
            <person name="Lipovich L."/>
            <person name="Liu J."/>
            <person name="Liuni S."/>
            <person name="McWilliam S."/>
            <person name="Madan Babu M."/>
            <person name="Madera M."/>
            <person name="Marchionni L."/>
            <person name="Matsuda H."/>
            <person name="Matsuzawa S."/>
            <person name="Miki H."/>
            <person name="Mignone F."/>
            <person name="Miyake S."/>
            <person name="Morris K."/>
            <person name="Mottagui-Tabar S."/>
            <person name="Mulder N."/>
            <person name="Nakano N."/>
            <person name="Nakauchi H."/>
            <person name="Ng P."/>
            <person name="Nilsson R."/>
            <person name="Nishiguchi S."/>
            <person name="Nishikawa S."/>
            <person name="Nori F."/>
            <person name="Ohara O."/>
            <person name="Okazaki Y."/>
            <person name="Orlando V."/>
            <person name="Pang K.C."/>
            <person name="Pavan W.J."/>
            <person name="Pavesi G."/>
            <person name="Pesole G."/>
            <person name="Petrovsky N."/>
            <person name="Piazza S."/>
            <person name="Reed J."/>
            <person name="Reid J.F."/>
            <person name="Ring B.Z."/>
            <person name="Ringwald M."/>
            <person name="Rost B."/>
            <person name="Ruan Y."/>
            <person name="Salzberg S.L."/>
            <person name="Sandelin A."/>
            <person name="Schneider C."/>
            <person name="Schoenbach C."/>
            <person name="Sekiguchi K."/>
            <person name="Semple C.A."/>
            <person name="Seno S."/>
            <person name="Sessa L."/>
            <person name="Sheng Y."/>
            <person name="Shibata Y."/>
            <person name="Shimada H."/>
            <person name="Shimada K."/>
            <person name="Silva D."/>
            <person name="Sinclair B."/>
            <person name="Sperling S."/>
            <person name="Stupka E."/>
            <person name="Sugiura K."/>
            <person name="Sultana R."/>
            <person name="Takenaka Y."/>
            <person name="Taki K."/>
            <person name="Tammoja K."/>
            <person name="Tan S.L."/>
            <person name="Tang S."/>
            <person name="Taylor M.S."/>
            <person name="Tegner J."/>
            <person name="Teichmann S.A."/>
            <person name="Ueda H.R."/>
            <person name="van Nimwegen E."/>
            <person name="Verardo R."/>
            <person name="Wei C.L."/>
            <person name="Yagi K."/>
            <person name="Yamanishi H."/>
            <person name="Zabarovsky E."/>
            <person name="Zhu S."/>
            <person name="Zimmer A."/>
            <person name="Hide W."/>
            <person name="Bult C."/>
            <person name="Grimmond S.M."/>
            <person name="Teasdale R.D."/>
            <person name="Liu E.T."/>
            <person name="Brusic V."/>
            <person name="Quackenbush J."/>
            <person name="Wahlestedt C."/>
            <person name="Mattick J.S."/>
            <person name="Hume D.A."/>
            <person name="Kai C."/>
            <person name="Sasaki D."/>
            <person name="Tomaru Y."/>
            <person name="Fukuda S."/>
            <person name="Kanamori-Katayama M."/>
            <person name="Suzuki M."/>
            <person name="Aoki J."/>
            <person name="Arakawa T."/>
            <person name="Iida J."/>
            <person name="Imamura K."/>
            <person name="Itoh M."/>
            <person name="Kato T."/>
            <person name="Kawaji H."/>
            <person name="Kawagashira N."/>
            <person name="Kawashima T."/>
            <person name="Kojima M."/>
            <person name="Kondo S."/>
            <person name="Konno H."/>
            <person name="Nakano K."/>
            <person name="Ninomiya N."/>
            <person name="Nishio T."/>
            <person name="Okada M."/>
            <person name="Plessy C."/>
            <person name="Shibata K."/>
            <person name="Shiraki T."/>
            <person name="Suzuki S."/>
            <person name="Tagami M."/>
            <person name="Waki K."/>
            <person name="Watahiki A."/>
            <person name="Okamura-Oho Y."/>
            <person name="Suzuki H."/>
            <person name="Kawai J."/>
            <person name="Hayashizaki Y."/>
        </authorList>
    </citation>
    <scope>NUCLEOTIDE SEQUENCE [LARGE SCALE MRNA]</scope>
    <source>
        <strain>NOD</strain>
        <tissue>Thymus</tissue>
    </source>
</reference>
<reference key="4">
    <citation type="journal article" date="1991" name="Mol. Cell. Biol.">
        <title>Loss of the amino-terminal helix-loop-helix domain of the vav proto-oncogene activates its transforming potential.</title>
        <authorList>
            <person name="Katzav S."/>
            <person name="Cleveland J.L."/>
            <person name="Heslop H.E."/>
            <person name="Pulido D."/>
        </authorList>
    </citation>
    <scope>NUCLEOTIDE SEQUENCE [MRNA] OF 1-93</scope>
</reference>
<reference key="5">
    <citation type="journal article" date="1996" name="Cell Growth Differ.">
        <title>Tec protein tyrosine kinase is involved in the signaling mechanism of granulocyte colony-stimulating factor receptor.</title>
        <authorList>
            <person name="Miyazato A."/>
            <person name="Yamashita Y."/>
            <person name="Hatake K."/>
            <person name="Miura Y."/>
            <person name="Ozawa K."/>
            <person name="Mano H."/>
        </authorList>
    </citation>
    <scope>INTERACTION WITH TEC</scope>
</reference>
<reference key="6">
    <citation type="journal article" date="1997" name="J. Leukoc. Biol.">
        <title>Bacterial LPS and IFN-gamma trigger the tyrosine phosphorylation of vav in macrophages: evidence for involvement of the hck tyrosine kinase.</title>
        <authorList>
            <person name="English B.K."/>
            <person name="Orlicek S.L."/>
            <person name="Mei Z."/>
            <person name="Meals E.A."/>
        </authorList>
    </citation>
    <scope>INTERACTION WITH HCK</scope>
    <scope>PHOSPHORYLATION</scope>
</reference>
<reference key="7">
    <citation type="journal article" date="2000" name="J. Exp. Med.">
        <title>Src-like adaptor protein (SLAP) is a negative regulator of T cell receptor signaling.</title>
        <authorList>
            <person name="Sosinowski T."/>
            <person name="Pandey A."/>
            <person name="Dixit V.M."/>
            <person name="Weiss A."/>
        </authorList>
    </citation>
    <scope>INTERACTION WITH SLA</scope>
</reference>
<reference key="8">
    <citation type="journal article" date="2000" name="Nature">
        <title>Cbl-b regulates the CD28 dependence of T-cell activation.</title>
        <authorList>
            <person name="Chiang Y.J."/>
            <person name="Kole H.K."/>
            <person name="Brown K."/>
            <person name="Naramura M."/>
            <person name="Fukuhara S."/>
            <person name="Hu R.-J."/>
            <person name="Jang I.K."/>
            <person name="Gutkind J.S."/>
            <person name="Shevach E."/>
            <person name="Gu H."/>
        </authorList>
    </citation>
    <scope>PHOSPHORYLATION</scope>
    <scope>INTERACTION WITH CBLB</scope>
</reference>
<reference key="9">
    <citation type="journal article" date="2000" name="Nature">
        <title>Negative regulation of lymphocyte activation and autoimmunity by the molecular adaptor Cbl-b.</title>
        <authorList>
            <person name="Bachmaier K."/>
            <person name="Krawczyk C."/>
            <person name="Kozieradzki I."/>
            <person name="Kong Y.-Y."/>
            <person name="Sasaki T."/>
            <person name="Oliveira-dos-Santos A."/>
            <person name="Mariathasan S."/>
            <person name="Bouchard D."/>
            <person name="Wakeham A."/>
            <person name="Itie A."/>
            <person name="Le J."/>
            <person name="Ohashi P.S."/>
            <person name="Sarosi I."/>
            <person name="Nishina H."/>
            <person name="Lipkowitz S."/>
            <person name="Penninger J.M."/>
        </authorList>
    </citation>
    <scope>PHOSPHORYLATION</scope>
    <scope>INTERACTION WITH CBLB</scope>
</reference>
<reference key="10">
    <citation type="journal article" date="2001" name="J. Biol. Chem.">
        <title>MIST functions through distinct domains in immunoreceptor signaling in the presence and absence of LAT.</title>
        <authorList>
            <person name="Goitsuka R."/>
            <person name="Tatsuno A."/>
            <person name="Ishiai M."/>
            <person name="Kurosaki T."/>
            <person name="Kitamura D."/>
        </authorList>
    </citation>
    <scope>INTERACTION WITH CLNK</scope>
</reference>
<reference key="11">
    <citation type="journal article" date="2006" name="Mol. Cell. Biol.">
        <title>Ccpg1, a novel scaffold protein that regulates the activity of the Rho guanine nucleotide exchange factor Dbs.</title>
        <authorList>
            <person name="Kostenko E.V."/>
            <person name="Olabisi O.O."/>
            <person name="Sahay S."/>
            <person name="Rodriguez P.L."/>
            <person name="Whitehead I.P."/>
        </authorList>
    </citation>
    <scope>POSSIBLE INTERACTION WITH CCPG1</scope>
</reference>
<reference key="12">
    <citation type="journal article" date="2007" name="J. Immunol.">
        <title>Quantitative time-resolved phosphoproteomic analysis of mast cell signaling.</title>
        <authorList>
            <person name="Cao L."/>
            <person name="Yu K."/>
            <person name="Banh C."/>
            <person name="Nguyen V."/>
            <person name="Ritz A."/>
            <person name="Raphael B.J."/>
            <person name="Kawakami Y."/>
            <person name="Kawakami T."/>
            <person name="Salomon A.R."/>
        </authorList>
    </citation>
    <scope>PHOSPHORYLATION [LARGE SCALE ANALYSIS] AT TYR-844</scope>
    <scope>IDENTIFICATION BY MASS SPECTROMETRY [LARGE SCALE ANALYSIS]</scope>
    <source>
        <tissue>Mast cell</tissue>
    </source>
</reference>
<reference key="13">
    <citation type="journal article" date="2009" name="Blood">
        <title>Liar, a novel Lyn-binding nuclear/cytoplasmic shuttling protein that influences erythropoietin-induced differentiation.</title>
        <authorList>
            <person name="Samuels A.L."/>
            <person name="Klinken S.P."/>
            <person name="Ingley E."/>
        </authorList>
    </citation>
    <scope>INTERACTION WITH ANKRD54</scope>
</reference>
<reference key="14">
    <citation type="journal article" date="2010" name="Cell">
        <title>A tissue-specific atlas of mouse protein phosphorylation and expression.</title>
        <authorList>
            <person name="Huttlin E.L."/>
            <person name="Jedrychowski M.P."/>
            <person name="Elias J.E."/>
            <person name="Goswami T."/>
            <person name="Rad R."/>
            <person name="Beausoleil S.A."/>
            <person name="Villen J."/>
            <person name="Haas W."/>
            <person name="Sowa M.E."/>
            <person name="Gygi S.P."/>
        </authorList>
    </citation>
    <scope>IDENTIFICATION BY MASS SPECTROMETRY [LARGE SCALE ANALYSIS]</scope>
    <source>
        <tissue>Lung</tissue>
        <tissue>Spleen</tissue>
    </source>
</reference>
<reference key="15">
    <citation type="journal article" date="2010" name="PLoS ONE">
        <title>Themis2/ICB1 is a signaling scaffold that selectively regulates macrophage Toll-like receptor signaling and cytokine production.</title>
        <authorList>
            <person name="Peirce M.J."/>
            <person name="Brook M."/>
            <person name="Morrice N."/>
            <person name="Snelgrove R."/>
            <person name="Begum S."/>
            <person name="Lanfrancotti A."/>
            <person name="Notley C."/>
            <person name="Hussell T."/>
            <person name="Cope A.P."/>
            <person name="Wait R."/>
        </authorList>
    </citation>
    <scope>INTERACTION WITH THEMIS2</scope>
</reference>
<reference key="16">
    <citation type="journal article" date="2014" name="Nat. Immunol.">
        <title>Quantitative proteomics analysis of signalosome dynamics in primary T cells identifies the surface receptor CD6 as a Lat adaptor-independent TCR signaling hub.</title>
        <authorList>
            <person name="Roncagalli R."/>
            <person name="Hauri S."/>
            <person name="Fiore F."/>
            <person name="Liang Y."/>
            <person name="Chen Z."/>
            <person name="Sansoni A."/>
            <person name="Kanduri K."/>
            <person name="Joly R."/>
            <person name="Malzac A."/>
            <person name="Laehdesmaeki H."/>
            <person name="Lahesmaa R."/>
            <person name="Yamasaki S."/>
            <person name="Saito T."/>
            <person name="Malissen M."/>
            <person name="Aebersold R."/>
            <person name="Gstaiger M."/>
            <person name="Malissen B."/>
        </authorList>
    </citation>
    <scope>INTERACTION WITH CD6</scope>
</reference>
<comment type="function">
    <text>Couples tyrosine kinase signals with the activation of the Rho/Rac GTPases, thus leading to cell differentiation and/or proliferation.</text>
</comment>
<comment type="subunit">
    <text evidence="2 9 10 11 12 13 14 16 17 18">Interacts with SHB (By similarity). Interacts with APS, DOCK2, GRB2, GRB3, DOCK2, SLA, TEC and ZNF655/VIK. Interacts with SIAH2; without leading to its degradation. Associates with BLNK, PLCG1, GRB2 and NCK1 in a B-cell antigen receptor-dependent fashion. Interacts with CBLB; which inhibits tyrosine phosphorylation and down-regulates activity (PubMed:10646608, PubMed:10646609). May interact with CCPG1 (PubMed:17000758). Interacts with CLNK (PubMed:11463797). Interacts with THEMIS2 (PubMed:20644716). Interacts with NEK3 and this interaction is prolactin-dependent. Interacts with ITK. Interacts with PTK2B/PYK2 (By similarity). Interacts with HCK. Interacts with PTK2B/PYK2. Interacts (via SH2 domain) with SYK (By similarity). Interacts with ANKRD54 (PubMed:19064729). Interacts with CD6 (PubMed:24584089). Interacts with isoform 2 of CRACR2A (By similarity). Interacts with LCP2; this interaction plays a role in TCR-mediated cytokine production (By similarity).</text>
</comment>
<comment type="interaction">
    <interactant intactId="EBI-1697">
        <id>P27870</id>
    </interactant>
    <interactant intactId="EBI-489611">
        <id>P19878</id>
        <label>NCF2</label>
    </interactant>
    <organismsDiffer>true</organismsDiffer>
    <experiments>4</experiments>
</comment>
<comment type="tissue specificity">
    <text evidence="15">Widely expressed in hematopoietic cells but not in other cell types. Found in the spleen and lung.</text>
</comment>
<comment type="domain">
    <text>The DH domain is involved in interaction with CCPG1.</text>
</comment>
<comment type="PTM">
    <text evidence="1 9 10 18">Phosphorylated by FYN (By similarity). Phosphorylated on tyrosine residues by HCK in response to IFNG and bacterial lipopolysaccharide (LPS).</text>
</comment>
<feature type="chain" id="PRO_0000080981" description="Proto-oncogene vav">
    <location>
        <begin position="1"/>
        <end position="845"/>
    </location>
</feature>
<feature type="domain" description="Calponin-homology (CH)" evidence="3">
    <location>
        <begin position="1"/>
        <end position="119"/>
    </location>
</feature>
<feature type="domain" description="DH" evidence="4">
    <location>
        <begin position="194"/>
        <end position="373"/>
    </location>
</feature>
<feature type="domain" description="PH" evidence="5">
    <location>
        <begin position="402"/>
        <end position="504"/>
    </location>
</feature>
<feature type="domain" description="SH3 1" evidence="7">
    <location>
        <begin position="592"/>
        <end position="660"/>
    </location>
</feature>
<feature type="domain" description="SH2" evidence="6">
    <location>
        <begin position="671"/>
        <end position="765"/>
    </location>
</feature>
<feature type="domain" description="SH3 2" evidence="7">
    <location>
        <begin position="782"/>
        <end position="842"/>
    </location>
</feature>
<feature type="zinc finger region" description="Phorbol-ester/DAG-type" evidence="8">
    <location>
        <begin position="515"/>
        <end position="564"/>
    </location>
</feature>
<feature type="modified residue" description="Phosphotyrosine" evidence="2">
    <location>
        <position position="826"/>
    </location>
</feature>
<feature type="modified residue" description="Phosphotyrosine" evidence="20">
    <location>
        <position position="844"/>
    </location>
</feature>
<feature type="mutagenesis site" description="Abolishes transforming activity." evidence="15">
    <original>C</original>
    <variation>S</variation>
    <location>
        <position position="529"/>
    </location>
</feature>
<feature type="mutagenesis site" description="Abolishes transforming activity." evidence="15">
    <original>C</original>
    <variation>S</variation>
    <location>
        <position position="532"/>
    </location>
</feature>
<feature type="mutagenesis site" description="Abolishes transforming activity." evidence="15">
    <original>H</original>
    <variation>D</variation>
    <location>
        <position position="554"/>
    </location>
</feature>
<feature type="sequence conflict" description="In Ref. 4; AAA63402." evidence="19" ref="4">
    <original>Q</original>
    <variation>E</variation>
    <location>
        <position position="29"/>
    </location>
</feature>
<feature type="sequence conflict" description="In Ref. 3; BAC40436." evidence="19" ref="3">
    <original>R</original>
    <variation>L</variation>
    <location>
        <position position="226"/>
    </location>
</feature>
<feature type="helix" evidence="21">
    <location>
        <begin position="170"/>
        <end position="177"/>
    </location>
</feature>
<feature type="turn" evidence="21">
    <location>
        <begin position="178"/>
        <end position="180"/>
    </location>
</feature>
<feature type="helix" evidence="25">
    <location>
        <begin position="191"/>
        <end position="219"/>
    </location>
</feature>
<feature type="helix" evidence="25">
    <location>
        <begin position="221"/>
        <end position="224"/>
    </location>
</feature>
<feature type="turn" evidence="25">
    <location>
        <begin position="225"/>
        <end position="227"/>
    </location>
</feature>
<feature type="helix" evidence="25">
    <location>
        <begin position="230"/>
        <end position="237"/>
    </location>
</feature>
<feature type="helix" evidence="25">
    <location>
        <begin position="240"/>
        <end position="259"/>
    </location>
</feature>
<feature type="helix" evidence="25">
    <location>
        <begin position="261"/>
        <end position="263"/>
    </location>
</feature>
<feature type="helix" evidence="25">
    <location>
        <begin position="266"/>
        <end position="273"/>
    </location>
</feature>
<feature type="helix" evidence="25">
    <location>
        <begin position="276"/>
        <end position="278"/>
    </location>
</feature>
<feature type="helix" evidence="25">
    <location>
        <begin position="279"/>
        <end position="300"/>
    </location>
</feature>
<feature type="helix" evidence="25">
    <location>
        <begin position="302"/>
        <end position="316"/>
    </location>
</feature>
<feature type="helix" evidence="25">
    <location>
        <begin position="322"/>
        <end position="325"/>
    </location>
</feature>
<feature type="helix" evidence="25">
    <location>
        <begin position="328"/>
        <end position="333"/>
    </location>
</feature>
<feature type="helix" evidence="25">
    <location>
        <begin position="336"/>
        <end position="346"/>
    </location>
</feature>
<feature type="helix" evidence="25">
    <location>
        <begin position="350"/>
        <end position="389"/>
    </location>
</feature>
<feature type="strand" evidence="25">
    <location>
        <begin position="390"/>
        <end position="392"/>
    </location>
</feature>
<feature type="helix" evidence="25">
    <location>
        <begin position="397"/>
        <end position="400"/>
    </location>
</feature>
<feature type="strand" evidence="25">
    <location>
        <begin position="402"/>
        <end position="412"/>
    </location>
</feature>
<feature type="strand" evidence="25">
    <location>
        <begin position="420"/>
        <end position="437"/>
    </location>
</feature>
<feature type="strand" evidence="25">
    <location>
        <begin position="440"/>
        <end position="448"/>
    </location>
</feature>
<feature type="turn" evidence="25">
    <location>
        <begin position="449"/>
        <end position="451"/>
    </location>
</feature>
<feature type="strand" evidence="25">
    <location>
        <begin position="452"/>
        <end position="455"/>
    </location>
</feature>
<feature type="strand" evidence="25">
    <location>
        <begin position="469"/>
        <end position="475"/>
    </location>
</feature>
<feature type="strand" evidence="25">
    <location>
        <begin position="481"/>
        <end position="488"/>
    </location>
</feature>
<feature type="helix" evidence="25">
    <location>
        <begin position="489"/>
        <end position="506"/>
    </location>
</feature>
<feature type="turn" evidence="25">
    <location>
        <begin position="509"/>
        <end position="512"/>
    </location>
</feature>
<feature type="helix" evidence="25">
    <location>
        <begin position="513"/>
        <end position="515"/>
    </location>
</feature>
<feature type="strand" evidence="25">
    <location>
        <begin position="518"/>
        <end position="521"/>
    </location>
</feature>
<feature type="turn" evidence="25">
    <location>
        <begin position="530"/>
        <end position="532"/>
    </location>
</feature>
<feature type="strand" evidence="25">
    <location>
        <begin position="538"/>
        <end position="541"/>
    </location>
</feature>
<feature type="strand" evidence="25">
    <location>
        <begin position="543"/>
        <end position="546"/>
    </location>
</feature>
<feature type="turn" evidence="25">
    <location>
        <begin position="547"/>
        <end position="549"/>
    </location>
</feature>
<feature type="helix" evidence="25">
    <location>
        <begin position="555"/>
        <end position="560"/>
    </location>
</feature>
<feature type="turn" evidence="23">
    <location>
        <begin position="585"/>
        <end position="587"/>
    </location>
</feature>
<feature type="strand" evidence="22">
    <location>
        <begin position="596"/>
        <end position="599"/>
    </location>
</feature>
<feature type="strand" evidence="22">
    <location>
        <begin position="603"/>
        <end position="607"/>
    </location>
</feature>
<feature type="helix" evidence="22">
    <location>
        <begin position="610"/>
        <end position="612"/>
    </location>
</feature>
<feature type="strand" evidence="22">
    <location>
        <begin position="624"/>
        <end position="629"/>
    </location>
</feature>
<feature type="strand" evidence="22">
    <location>
        <begin position="635"/>
        <end position="641"/>
    </location>
</feature>
<feature type="turn" evidence="22">
    <location>
        <begin position="642"/>
        <end position="644"/>
    </location>
</feature>
<feature type="strand" evidence="22">
    <location>
        <begin position="647"/>
        <end position="651"/>
    </location>
</feature>
<feature type="helix" evidence="22">
    <location>
        <begin position="652"/>
        <end position="654"/>
    </location>
</feature>
<feature type="strand" evidence="22">
    <location>
        <begin position="655"/>
        <end position="657"/>
    </location>
</feature>
<feature type="strand" evidence="24">
    <location>
        <begin position="786"/>
        <end position="791"/>
    </location>
</feature>
<feature type="strand" evidence="24">
    <location>
        <begin position="796"/>
        <end position="800"/>
    </location>
</feature>
<feature type="strand" evidence="24">
    <location>
        <begin position="808"/>
        <end position="813"/>
    </location>
</feature>
<feature type="strand" evidence="24">
    <location>
        <begin position="817"/>
        <end position="825"/>
    </location>
</feature>
<feature type="strand" evidence="24">
    <location>
        <begin position="828"/>
        <end position="833"/>
    </location>
</feature>
<feature type="strand" evidence="24">
    <location>
        <begin position="836"/>
        <end position="841"/>
    </location>
</feature>
<keyword id="KW-0002">3D-structure</keyword>
<keyword id="KW-0344">Guanine-nucleotide releasing factor</keyword>
<keyword id="KW-0479">Metal-binding</keyword>
<keyword id="KW-0597">Phosphoprotein</keyword>
<keyword id="KW-0656">Proto-oncogene</keyword>
<keyword id="KW-1185">Reference proteome</keyword>
<keyword id="KW-0677">Repeat</keyword>
<keyword id="KW-0727">SH2 domain</keyword>
<keyword id="KW-0728">SH3 domain</keyword>
<keyword id="KW-0862">Zinc</keyword>
<keyword id="KW-0863">Zinc-finger</keyword>
<organism>
    <name type="scientific">Mus musculus</name>
    <name type="common">Mouse</name>
    <dbReference type="NCBI Taxonomy" id="10090"/>
    <lineage>
        <taxon>Eukaryota</taxon>
        <taxon>Metazoa</taxon>
        <taxon>Chordata</taxon>
        <taxon>Craniata</taxon>
        <taxon>Vertebrata</taxon>
        <taxon>Euteleostomi</taxon>
        <taxon>Mammalia</taxon>
        <taxon>Eutheria</taxon>
        <taxon>Euarchontoglires</taxon>
        <taxon>Glires</taxon>
        <taxon>Rodentia</taxon>
        <taxon>Myomorpha</taxon>
        <taxon>Muroidea</taxon>
        <taxon>Muridae</taxon>
        <taxon>Murinae</taxon>
        <taxon>Mus</taxon>
        <taxon>Mus</taxon>
    </lineage>
</organism>
<name>VAV_MOUSE</name>